<keyword id="KW-0963">Cytoplasm</keyword>
<keyword id="KW-0472">Membrane</keyword>
<keyword id="KW-0677">Repeat</keyword>
<feature type="chain" id="PRO_0000206301" description="Protein sly1 homolog">
    <location>
        <begin position="1"/>
        <end position="656"/>
    </location>
</feature>
<feature type="repeat" description="1" evidence="2">
    <location>
        <begin position="85"/>
        <end position="121"/>
    </location>
</feature>
<feature type="repeat" description="2" evidence="2">
    <location>
        <begin position="203"/>
        <end position="245"/>
    </location>
</feature>
<feature type="repeat" description="3" evidence="2">
    <location>
        <begin position="419"/>
        <end position="456"/>
    </location>
</feature>
<feature type="repeat" description="4" evidence="2">
    <location>
        <begin position="460"/>
        <end position="496"/>
    </location>
</feature>
<feature type="region of interest" description="4 X approximate repeats">
    <location>
        <begin position="85"/>
        <end position="496"/>
    </location>
</feature>
<accession>O18637</accession>
<evidence type="ECO:0000250" key="1"/>
<evidence type="ECO:0000305" key="2"/>
<sequence length="656" mass="74423">MLTLRERQINAIKQMLNLNSQQPKAMAADAVWKILIYDRVGQDIISPIISIKELRELGVTLHVQLHSDRDSIPDVPAVYFCLPTDENLDRIQQDFSNGLYDIYHLNFLAPITRSKIENLAAAALHAGCVANIHRVYDQYVNFISLEDDFFILKHQQSDQLSYYAINRANTRDEEMEALMDSIVDSLFALFVTLGNVPIIRCPRNSAAEMVARKLEKKLRENLWDARANLFHMDATQAGGGVFSFQRPVLLLLDRNMDLATPLHHTWSYQALVHDVLDLGLNLVYVEDEGARKKPKACDLDRNDRFWVTHKGSPFPTVAEAIQEELESYRNSEEEIKRLKTSMGIEGESDIAFSLVNDTTAMLTSAVNSLPQLMEKKRLIDMHTKIATAILNCIKARRLDSYFEIEEKIMSKQTLDKPLLELLRDAEFGQPEDKLRLYIIYYICAQQLPEPELERLREALQSAGCDLTALAYVQRWKSIMNRSPSISQATQYEGGGTRTVSMFTKLVSQGSSFVMEGVKNLVVKRHVNINLRLGSDRVKAKLIPNFLENLPVTKITEQVMECRSNAETDDYLYLAPKLLKGGDVLPKNRAPFQDAVVFMVGGGNYIEYQNLVDFIKQKQTSNVHRRIIYGGSTLTNARQFLKELSALGGEIQTPTAS</sequence>
<organism>
    <name type="scientific">Drosophila virilis</name>
    <name type="common">Fruit fly</name>
    <dbReference type="NCBI Taxonomy" id="7244"/>
    <lineage>
        <taxon>Eukaryota</taxon>
        <taxon>Metazoa</taxon>
        <taxon>Ecdysozoa</taxon>
        <taxon>Arthropoda</taxon>
        <taxon>Hexapoda</taxon>
        <taxon>Insecta</taxon>
        <taxon>Pterygota</taxon>
        <taxon>Neoptera</taxon>
        <taxon>Endopterygota</taxon>
        <taxon>Diptera</taxon>
        <taxon>Brachycera</taxon>
        <taxon>Muscomorpha</taxon>
        <taxon>Ephydroidea</taxon>
        <taxon>Drosophilidae</taxon>
        <taxon>Drosophila</taxon>
    </lineage>
</organism>
<proteinExistence type="inferred from homology"/>
<comment type="function">
    <text evidence="1">Non-vital for development.</text>
</comment>
<comment type="subcellular location">
    <subcellularLocation>
        <location evidence="1">Cytoplasm</location>
    </subcellularLocation>
    <subcellularLocation>
        <location evidence="1">Membrane</location>
        <topology evidence="1">Peripheral membrane protein</topology>
    </subcellularLocation>
</comment>
<comment type="similarity">
    <text evidence="2">Belongs to the STXBP/unc-18/SEC1 family.</text>
</comment>
<reference evidence="2" key="1">
    <citation type="journal article" date="1996" name="Genes Dev.">
        <title>Promoter specificity mediates the independent regulation of neighboring genes.</title>
        <authorList>
            <person name="Merli C."/>
            <person name="Bergstrom D.E."/>
            <person name="Cygan J.A."/>
            <person name="Blackman R.K."/>
        </authorList>
    </citation>
    <scope>NUCLEOTIDE SEQUENCE [GENOMIC DNA]</scope>
</reference>
<name>SLY1_DROVI</name>
<protein>
    <recommendedName>
        <fullName>Protein sly1 homolog</fullName>
    </recommendedName>
</protein>
<dbReference type="EMBL" id="U95037">
    <property type="protein sequence ID" value="AAB71530.1"/>
    <property type="molecule type" value="Genomic_DNA"/>
</dbReference>
<dbReference type="SMR" id="O18637"/>
<dbReference type="eggNOG" id="KOG1301">
    <property type="taxonomic scope" value="Eukaryota"/>
</dbReference>
<dbReference type="OrthoDB" id="10251230at2759"/>
<dbReference type="GO" id="GO:0005737">
    <property type="term" value="C:cytoplasm"/>
    <property type="evidence" value="ECO:0007669"/>
    <property type="project" value="UniProtKB-SubCell"/>
</dbReference>
<dbReference type="GO" id="GO:0016020">
    <property type="term" value="C:membrane"/>
    <property type="evidence" value="ECO:0007669"/>
    <property type="project" value="UniProtKB-SubCell"/>
</dbReference>
<dbReference type="GO" id="GO:0016192">
    <property type="term" value="P:vesicle-mediated transport"/>
    <property type="evidence" value="ECO:0007669"/>
    <property type="project" value="InterPro"/>
</dbReference>
<dbReference type="GO" id="GO:0048190">
    <property type="term" value="P:wing disc dorsal/ventral pattern formation"/>
    <property type="evidence" value="ECO:0007669"/>
    <property type="project" value="EnsemblMetazoa"/>
</dbReference>
<dbReference type="FunFam" id="1.25.40.60:FF:000002">
    <property type="entry name" value="Sec1 family domain containing 1"/>
    <property type="match status" value="1"/>
</dbReference>
<dbReference type="FunFam" id="3.40.50.2060:FF:000002">
    <property type="entry name" value="sec1 family domain-containing protein 1"/>
    <property type="match status" value="1"/>
</dbReference>
<dbReference type="Gene3D" id="1.25.40.60">
    <property type="match status" value="1"/>
</dbReference>
<dbReference type="Gene3D" id="3.40.50.1910">
    <property type="match status" value="1"/>
</dbReference>
<dbReference type="Gene3D" id="3.40.50.2060">
    <property type="match status" value="1"/>
</dbReference>
<dbReference type="Gene3D" id="3.90.830.10">
    <property type="entry name" value="Syntaxin Binding Protein 1, Chain A, domain 2"/>
    <property type="match status" value="1"/>
</dbReference>
<dbReference type="InterPro" id="IPR043154">
    <property type="entry name" value="Sec-1-like_dom1"/>
</dbReference>
<dbReference type="InterPro" id="IPR043127">
    <property type="entry name" value="Sec-1-like_dom3a"/>
</dbReference>
<dbReference type="InterPro" id="IPR001619">
    <property type="entry name" value="Sec1-like"/>
</dbReference>
<dbReference type="InterPro" id="IPR027482">
    <property type="entry name" value="Sec1-like_dom2"/>
</dbReference>
<dbReference type="InterPro" id="IPR036045">
    <property type="entry name" value="Sec1-like_sf"/>
</dbReference>
<dbReference type="PANTHER" id="PTHR11679">
    <property type="entry name" value="VESICLE PROTEIN SORTING-ASSOCIATED"/>
    <property type="match status" value="1"/>
</dbReference>
<dbReference type="Pfam" id="PF00995">
    <property type="entry name" value="Sec1"/>
    <property type="match status" value="1"/>
</dbReference>
<dbReference type="PIRSF" id="PIRSF005715">
    <property type="entry name" value="VPS45_Sec1"/>
    <property type="match status" value="1"/>
</dbReference>
<dbReference type="SUPFAM" id="SSF56815">
    <property type="entry name" value="Sec1/munc18-like (SM) proteins"/>
    <property type="match status" value="1"/>
</dbReference>
<gene>
    <name type="primary">Slh</name>
</gene>